<keyword id="KW-0027">Amidation</keyword>
<keyword id="KW-1015">Disulfide bond</keyword>
<keyword id="KW-0960">Knottin</keyword>
<keyword id="KW-0528">Neurotoxin</keyword>
<keyword id="KW-0964">Secreted</keyword>
<keyword id="KW-0732">Signal</keyword>
<keyword id="KW-0800">Toxin</keyword>
<organism>
    <name type="scientific">Conus consors</name>
    <name type="common">Singed cone</name>
    <dbReference type="NCBI Taxonomy" id="101297"/>
    <lineage>
        <taxon>Eukaryota</taxon>
        <taxon>Metazoa</taxon>
        <taxon>Spiralia</taxon>
        <taxon>Lophotrochozoa</taxon>
        <taxon>Mollusca</taxon>
        <taxon>Gastropoda</taxon>
        <taxon>Caenogastropoda</taxon>
        <taxon>Neogastropoda</taxon>
        <taxon>Conoidea</taxon>
        <taxon>Conidae</taxon>
        <taxon>Conus</taxon>
        <taxon>Pionoconus</taxon>
    </lineage>
</organism>
<feature type="signal peptide" evidence="3">
    <location>
        <begin position="1"/>
        <end position="22"/>
    </location>
</feature>
<feature type="propeptide" id="PRO_0000451775" evidence="7">
    <location>
        <begin position="23"/>
        <end position="45"/>
    </location>
</feature>
<feature type="peptide" id="PRO_0000419887" description="Omega-conotoxin-like CnVIIG" evidence="4">
    <location>
        <begin position="46"/>
        <end position="71"/>
    </location>
</feature>
<feature type="peptide" id="PRO_0000419888" description="Omega-conotoxin-like CnVIIB" evidence="4">
    <location>
        <begin position="46"/>
        <end position="70"/>
    </location>
</feature>
<feature type="modified residue" description="Cysteine amide" evidence="4">
    <location>
        <position position="70"/>
    </location>
</feature>
<feature type="disulfide bond" evidence="2">
    <location>
        <begin position="46"/>
        <end position="61"/>
    </location>
</feature>
<feature type="disulfide bond" evidence="2">
    <location>
        <begin position="53"/>
        <end position="65"/>
    </location>
</feature>
<feature type="disulfide bond" evidence="2">
    <location>
        <begin position="60"/>
        <end position="70"/>
    </location>
</feature>
<accession>P0DKQ5</accession>
<accession>S6CQ14</accession>
<sequence>MKLTCVVIVAVLLLTACQLITADDSRGTQRHRALRSDTKLSMSTRCKGKGASCRRTSYDCCTGSCRSGKCG</sequence>
<protein>
    <recommendedName>
        <fullName evidence="5">Omega-conotoxin-like CnVIIG</fullName>
    </recommendedName>
    <component>
        <recommendedName>
            <fullName evidence="5">Omega-conotoxin-like CnVIIB</fullName>
        </recommendedName>
    </component>
</protein>
<proteinExistence type="evidence at protein level"/>
<dbReference type="EMBL" id="HE856384">
    <property type="protein sequence ID" value="CCI55497.1"/>
    <property type="molecule type" value="mRNA"/>
</dbReference>
<dbReference type="SMR" id="P0DKQ5"/>
<dbReference type="GO" id="GO:0005576">
    <property type="term" value="C:extracellular region"/>
    <property type="evidence" value="ECO:0007669"/>
    <property type="project" value="UniProtKB-SubCell"/>
</dbReference>
<dbReference type="GO" id="GO:0008200">
    <property type="term" value="F:ion channel inhibitor activity"/>
    <property type="evidence" value="ECO:0007669"/>
    <property type="project" value="InterPro"/>
</dbReference>
<dbReference type="GO" id="GO:0090729">
    <property type="term" value="F:toxin activity"/>
    <property type="evidence" value="ECO:0007669"/>
    <property type="project" value="UniProtKB-KW"/>
</dbReference>
<dbReference type="InterPro" id="IPR004214">
    <property type="entry name" value="Conotoxin"/>
</dbReference>
<dbReference type="InterPro" id="IPR012321">
    <property type="entry name" value="Conotoxin_omega-typ_CS"/>
</dbReference>
<dbReference type="Pfam" id="PF02950">
    <property type="entry name" value="Conotoxin"/>
    <property type="match status" value="1"/>
</dbReference>
<dbReference type="SUPFAM" id="SSF57059">
    <property type="entry name" value="omega toxin-like"/>
    <property type="match status" value="1"/>
</dbReference>
<dbReference type="PROSITE" id="PS60004">
    <property type="entry name" value="OMEGA_CONOTOXIN"/>
    <property type="match status" value="1"/>
</dbReference>
<comment type="function">
    <text evidence="1">Omega-conotoxins act at presynaptic membranes, they bind and block voltage-gated calcium channels (Cav).</text>
</comment>
<comment type="subcellular location">
    <subcellularLocation>
        <location evidence="4">Secreted</location>
    </subcellularLocation>
</comment>
<comment type="tissue specificity">
    <text evidence="7">Expressed by the venom duct.</text>
</comment>
<comment type="domain">
    <text evidence="2">The presence of a 'disulfide through disulfide knot' structurally defines this protein as a knottin.</text>
</comment>
<comment type="domain">
    <text evidence="6">The cysteine framework is VI/VII (C-C-CC-C-C).</text>
</comment>
<comment type="mass spectrometry">
    <molecule>Omega-conotoxin-like CnVIIG</molecule>
    <text>CnVIIG.</text>
</comment>
<comment type="mass spectrometry">
    <molecule>Omega-conotoxin-like CnVIIB</molecule>
    <text>CnVIIB.</text>
</comment>
<comment type="miscellaneous">
    <text evidence="7">Found in injectable (milked) (IV) venom.</text>
</comment>
<comment type="similarity">
    <text evidence="6">Belongs to the conotoxin M superfamily.</text>
</comment>
<name>M7G_CONCN</name>
<evidence type="ECO:0000250" key="1"/>
<evidence type="ECO:0000250" key="2">
    <source>
        <dbReference type="UniProtKB" id="P05484"/>
    </source>
</evidence>
<evidence type="ECO:0000255" key="3"/>
<evidence type="ECO:0000269" key="4">
    <source>
    </source>
</evidence>
<evidence type="ECO:0000303" key="5">
    <source>
    </source>
</evidence>
<evidence type="ECO:0000305" key="6"/>
<evidence type="ECO:0000305" key="7">
    <source>
    </source>
</evidence>
<reference key="1">
    <citation type="journal article" date="2012" name="J. Proteomics">
        <title>Large-scale discovery of conopeptides and conoproteins in the injectable venom of a fish-hunting cone snail using a combined proteomic and transcriptomic approach.</title>
        <authorList>
            <person name="Violette A."/>
            <person name="Biass D."/>
            <person name="Dutertre S."/>
            <person name="Koua D."/>
            <person name="Piquemal D."/>
            <person name="Pierrat F."/>
            <person name="Stocklin R."/>
            <person name="Favreau P."/>
        </authorList>
    </citation>
    <scope>NUCLEOTIDE SEQUENCE [MRNA]</scope>
    <scope>AMIDATION AT CYS-70</scope>
    <scope>MASS SPECTROMETRY</scope>
    <scope>IDENTIFICATION BY MASS SPECTROMETRY</scope>
    <scope>SUBCELLULAR LOCATION</scope>
    <source>
        <tissue>Venom</tissue>
        <tissue>Venom duct</tissue>
    </source>
</reference>